<comment type="subcellular location">
    <subcellularLocation>
        <location evidence="3">Membrane</location>
        <topology evidence="3">Multi-pass membrane protein</topology>
    </subcellularLocation>
</comment>
<organism>
    <name type="scientific">Dictyostelium discoideum</name>
    <name type="common">Social amoeba</name>
    <dbReference type="NCBI Taxonomy" id="44689"/>
    <lineage>
        <taxon>Eukaryota</taxon>
        <taxon>Amoebozoa</taxon>
        <taxon>Evosea</taxon>
        <taxon>Eumycetozoa</taxon>
        <taxon>Dictyostelia</taxon>
        <taxon>Dictyosteliales</taxon>
        <taxon>Dictyosteliaceae</taxon>
        <taxon>Dictyostelium</taxon>
    </lineage>
</organism>
<sequence>MEDRNLERNIGSDISSSSSIDMSQSTNLEISIDQSINRNLEKIDISEDDVRRGEKKIESFENGENNNNNNNNNNNNNNNNNNNNNKNEDRKFKKTLFCIKMYIIQYFKKWLGTGKDKRPPIPDLEEIGWTWLASFTGILVLALIHYREALDAQMQVLIGSFAASAVIIFGVPKSPLAQPRNLIMGHFLSAVVGSVIRVALVYTNANFEVACALAVSLSIMLMQFTNSLHPPGGATALICVMGVEQRWRGFYFIFVPILSGALIMLLTALVVNNFARKRSYPLYWW</sequence>
<evidence type="ECO:0000255" key="1"/>
<evidence type="ECO:0000256" key="2">
    <source>
        <dbReference type="SAM" id="MobiDB-lite"/>
    </source>
</evidence>
<evidence type="ECO:0000305" key="3"/>
<feature type="chain" id="PRO_0000393724" description="Transmembrane protein DDB_G0269096">
    <location>
        <begin position="1"/>
        <end position="285"/>
    </location>
</feature>
<feature type="transmembrane region" description="Helical" evidence="1">
    <location>
        <begin position="124"/>
        <end position="144"/>
    </location>
</feature>
<feature type="transmembrane region" description="Helical" evidence="1">
    <location>
        <begin position="152"/>
        <end position="172"/>
    </location>
</feature>
<feature type="transmembrane region" description="Helical" evidence="1">
    <location>
        <begin position="182"/>
        <end position="202"/>
    </location>
</feature>
<feature type="transmembrane region" description="Helical" evidence="1">
    <location>
        <begin position="205"/>
        <end position="225"/>
    </location>
</feature>
<feature type="transmembrane region" description="Helical" evidence="1">
    <location>
        <begin position="250"/>
        <end position="270"/>
    </location>
</feature>
<feature type="region of interest" description="Disordered" evidence="2">
    <location>
        <begin position="1"/>
        <end position="25"/>
    </location>
</feature>
<feature type="region of interest" description="Disordered" evidence="2">
    <location>
        <begin position="59"/>
        <end position="87"/>
    </location>
</feature>
<feature type="compositionally biased region" description="Low complexity" evidence="2">
    <location>
        <begin position="12"/>
        <end position="25"/>
    </location>
</feature>
<feature type="compositionally biased region" description="Low complexity" evidence="2">
    <location>
        <begin position="65"/>
        <end position="85"/>
    </location>
</feature>
<reference key="1">
    <citation type="journal article" date="2005" name="Nature">
        <title>The genome of the social amoeba Dictyostelium discoideum.</title>
        <authorList>
            <person name="Eichinger L."/>
            <person name="Pachebat J.A."/>
            <person name="Gloeckner G."/>
            <person name="Rajandream M.A."/>
            <person name="Sucgang R."/>
            <person name="Berriman M."/>
            <person name="Song J."/>
            <person name="Olsen R."/>
            <person name="Szafranski K."/>
            <person name="Xu Q."/>
            <person name="Tunggal B."/>
            <person name="Kummerfeld S."/>
            <person name="Madera M."/>
            <person name="Konfortov B.A."/>
            <person name="Rivero F."/>
            <person name="Bankier A.T."/>
            <person name="Lehmann R."/>
            <person name="Hamlin N."/>
            <person name="Davies R."/>
            <person name="Gaudet P."/>
            <person name="Fey P."/>
            <person name="Pilcher K."/>
            <person name="Chen G."/>
            <person name="Saunders D."/>
            <person name="Sodergren E.J."/>
            <person name="Davis P."/>
            <person name="Kerhornou A."/>
            <person name="Nie X."/>
            <person name="Hall N."/>
            <person name="Anjard C."/>
            <person name="Hemphill L."/>
            <person name="Bason N."/>
            <person name="Farbrother P."/>
            <person name="Desany B."/>
            <person name="Just E."/>
            <person name="Morio T."/>
            <person name="Rost R."/>
            <person name="Churcher C.M."/>
            <person name="Cooper J."/>
            <person name="Haydock S."/>
            <person name="van Driessche N."/>
            <person name="Cronin A."/>
            <person name="Goodhead I."/>
            <person name="Muzny D.M."/>
            <person name="Mourier T."/>
            <person name="Pain A."/>
            <person name="Lu M."/>
            <person name="Harper D."/>
            <person name="Lindsay R."/>
            <person name="Hauser H."/>
            <person name="James K.D."/>
            <person name="Quiles M."/>
            <person name="Madan Babu M."/>
            <person name="Saito T."/>
            <person name="Buchrieser C."/>
            <person name="Wardroper A."/>
            <person name="Felder M."/>
            <person name="Thangavelu M."/>
            <person name="Johnson D."/>
            <person name="Knights A."/>
            <person name="Loulseged H."/>
            <person name="Mungall K.L."/>
            <person name="Oliver K."/>
            <person name="Price C."/>
            <person name="Quail M.A."/>
            <person name="Urushihara H."/>
            <person name="Hernandez J."/>
            <person name="Rabbinowitsch E."/>
            <person name="Steffen D."/>
            <person name="Sanders M."/>
            <person name="Ma J."/>
            <person name="Kohara Y."/>
            <person name="Sharp S."/>
            <person name="Simmonds M.N."/>
            <person name="Spiegler S."/>
            <person name="Tivey A."/>
            <person name="Sugano S."/>
            <person name="White B."/>
            <person name="Walker D."/>
            <person name="Woodward J.R."/>
            <person name="Winckler T."/>
            <person name="Tanaka Y."/>
            <person name="Shaulsky G."/>
            <person name="Schleicher M."/>
            <person name="Weinstock G.M."/>
            <person name="Rosenthal A."/>
            <person name="Cox E.C."/>
            <person name="Chisholm R.L."/>
            <person name="Gibbs R.A."/>
            <person name="Loomis W.F."/>
            <person name="Platzer M."/>
            <person name="Kay R.R."/>
            <person name="Williams J.G."/>
            <person name="Dear P.H."/>
            <person name="Noegel A.A."/>
            <person name="Barrell B.G."/>
            <person name="Kuspa A."/>
        </authorList>
    </citation>
    <scope>NUCLEOTIDE SEQUENCE [LARGE SCALE GENOMIC DNA]</scope>
    <source>
        <strain>AX4</strain>
    </source>
</reference>
<keyword id="KW-0472">Membrane</keyword>
<keyword id="KW-1185">Reference proteome</keyword>
<keyword id="KW-0812">Transmembrane</keyword>
<keyword id="KW-1133">Transmembrane helix</keyword>
<name>Y9096_DICDI</name>
<gene>
    <name type="ORF">DDB_G0269096</name>
</gene>
<protein>
    <recommendedName>
        <fullName>Transmembrane protein DDB_G0269096</fullName>
    </recommendedName>
</protein>
<accession>Q55EF8</accession>
<dbReference type="EMBL" id="AAFI02000004">
    <property type="protein sequence ID" value="EAL73137.1"/>
    <property type="molecule type" value="Genomic_DNA"/>
</dbReference>
<dbReference type="RefSeq" id="XP_647062.1">
    <property type="nucleotide sequence ID" value="XM_641970.1"/>
</dbReference>
<dbReference type="FunCoup" id="Q55EF8">
    <property type="interactions" value="1"/>
</dbReference>
<dbReference type="PaxDb" id="44689-DDB0216639"/>
<dbReference type="EnsemblProtists" id="EAL73137">
    <property type="protein sequence ID" value="EAL73137"/>
    <property type="gene ID" value="DDB_G0269096"/>
</dbReference>
<dbReference type="GeneID" id="8616762"/>
<dbReference type="KEGG" id="ddi:DDB_G0269096"/>
<dbReference type="dictyBase" id="DDB_G0269096"/>
<dbReference type="VEuPathDB" id="AmoebaDB:DDB_G0269096"/>
<dbReference type="eggNOG" id="ENOG502S3SU">
    <property type="taxonomic scope" value="Eukaryota"/>
</dbReference>
<dbReference type="HOGENOM" id="CLU_040397_3_0_1"/>
<dbReference type="InParanoid" id="Q55EF8"/>
<dbReference type="OMA" id="ALTNTTH"/>
<dbReference type="PhylomeDB" id="Q55EF8"/>
<dbReference type="PRO" id="PR:Q55EF8"/>
<dbReference type="Proteomes" id="UP000002195">
    <property type="component" value="Chromosome 1"/>
</dbReference>
<dbReference type="GO" id="GO:0016020">
    <property type="term" value="C:membrane"/>
    <property type="evidence" value="ECO:0007669"/>
    <property type="project" value="UniProtKB-SubCell"/>
</dbReference>
<dbReference type="InterPro" id="IPR007065">
    <property type="entry name" value="HPP"/>
</dbReference>
<dbReference type="PANTHER" id="PTHR33741">
    <property type="entry name" value="TRANSMEMBRANE PROTEIN DDB_G0269096-RELATED"/>
    <property type="match status" value="1"/>
</dbReference>
<dbReference type="PANTHER" id="PTHR33741:SF5">
    <property type="entry name" value="TRANSMEMBRANE PROTEIN DDB_G0269096-RELATED"/>
    <property type="match status" value="1"/>
</dbReference>
<dbReference type="Pfam" id="PF04982">
    <property type="entry name" value="TM_HPP"/>
    <property type="match status" value="1"/>
</dbReference>
<proteinExistence type="predicted"/>